<keyword id="KW-0903">Direct protein sequencing</keyword>
<keyword id="KW-1015">Disulfide bond</keyword>
<keyword id="KW-0872">Ion channel impairing toxin</keyword>
<keyword id="KW-0528">Neurotoxin</keyword>
<keyword id="KW-0964">Secreted</keyword>
<keyword id="KW-0800">Toxin</keyword>
<keyword id="KW-0738">Voltage-gated sodium channel impairing toxin</keyword>
<evidence type="ECO:0000250" key="1"/>
<evidence type="ECO:0000255" key="2">
    <source>
        <dbReference type="PROSITE-ProRule" id="PRU01210"/>
    </source>
</evidence>
<evidence type="ECO:0000269" key="3">
    <source>
    </source>
</evidence>
<evidence type="ECO:0000305" key="4"/>
<reference key="1">
    <citation type="journal article" date="1992" name="Int. J. Pept. Protein Res.">
        <title>Isolation and primary structure of a potent toxin from the venom of the scorpion Centruroides sculpturatus Ewing.</title>
        <authorList>
            <person name="Pete M.J."/>
            <person name="Conlon J.M."/>
            <person name="Murphy R.F."/>
        </authorList>
    </citation>
    <scope>PROTEIN SEQUENCE</scope>
    <scope>TOXIC DOSE</scope>
    <source>
        <tissue>Venom</tissue>
    </source>
</reference>
<protein>
    <recommendedName>
        <fullName>Toxin CsEM1</fullName>
        <shortName>CsE M1</shortName>
    </recommendedName>
    <alternativeName>
        <fullName>CsEIII</fullName>
    </alternativeName>
</protein>
<name>SCXM_CENSC</name>
<feature type="chain" id="PRO_0000066776" description="Toxin CsEM1">
    <location>
        <begin position="1"/>
        <end position="65"/>
    </location>
</feature>
<feature type="domain" description="LCN-type CS-alpha/beta" evidence="2">
    <location>
        <begin position="1"/>
        <end position="65"/>
    </location>
</feature>
<feature type="disulfide bond" evidence="2">
    <location>
        <begin position="12"/>
        <end position="64"/>
    </location>
</feature>
<feature type="disulfide bond" evidence="2">
    <location>
        <begin position="16"/>
        <end position="40"/>
    </location>
</feature>
<feature type="disulfide bond" evidence="2">
    <location>
        <begin position="25"/>
        <end position="45"/>
    </location>
</feature>
<feature type="disulfide bond" evidence="2">
    <location>
        <begin position="29"/>
        <end position="47"/>
    </location>
</feature>
<accession>P56646</accession>
<dbReference type="SMR" id="P56646"/>
<dbReference type="GO" id="GO:0005576">
    <property type="term" value="C:extracellular region"/>
    <property type="evidence" value="ECO:0007669"/>
    <property type="project" value="UniProtKB-SubCell"/>
</dbReference>
<dbReference type="GO" id="GO:0019871">
    <property type="term" value="F:sodium channel inhibitor activity"/>
    <property type="evidence" value="ECO:0007669"/>
    <property type="project" value="InterPro"/>
</dbReference>
<dbReference type="GO" id="GO:0090729">
    <property type="term" value="F:toxin activity"/>
    <property type="evidence" value="ECO:0007669"/>
    <property type="project" value="UniProtKB-KW"/>
</dbReference>
<dbReference type="GO" id="GO:0006952">
    <property type="term" value="P:defense response"/>
    <property type="evidence" value="ECO:0007669"/>
    <property type="project" value="InterPro"/>
</dbReference>
<dbReference type="CDD" id="cd23106">
    <property type="entry name" value="neurotoxins_LC_scorpion"/>
    <property type="match status" value="1"/>
</dbReference>
<dbReference type="FunFam" id="3.30.30.10:FF:000002">
    <property type="entry name" value="Alpha-like toxin BmK-M1"/>
    <property type="match status" value="1"/>
</dbReference>
<dbReference type="Gene3D" id="3.30.30.10">
    <property type="entry name" value="Knottin, scorpion toxin-like"/>
    <property type="match status" value="1"/>
</dbReference>
<dbReference type="InterPro" id="IPR044062">
    <property type="entry name" value="LCN-type_CS_alpha_beta_dom"/>
</dbReference>
<dbReference type="InterPro" id="IPR003614">
    <property type="entry name" value="Scorpion_toxin-like"/>
</dbReference>
<dbReference type="InterPro" id="IPR036574">
    <property type="entry name" value="Scorpion_toxin-like_sf"/>
</dbReference>
<dbReference type="InterPro" id="IPR018218">
    <property type="entry name" value="Scorpion_toxinL"/>
</dbReference>
<dbReference type="InterPro" id="IPR002061">
    <property type="entry name" value="Scorpion_toxinL/defensin"/>
</dbReference>
<dbReference type="Pfam" id="PF00537">
    <property type="entry name" value="Toxin_3"/>
    <property type="match status" value="1"/>
</dbReference>
<dbReference type="PRINTS" id="PR00285">
    <property type="entry name" value="SCORPNTOXIN"/>
</dbReference>
<dbReference type="SMART" id="SM00505">
    <property type="entry name" value="Knot1"/>
    <property type="match status" value="1"/>
</dbReference>
<dbReference type="SUPFAM" id="SSF57095">
    <property type="entry name" value="Scorpion toxin-like"/>
    <property type="match status" value="1"/>
</dbReference>
<dbReference type="PROSITE" id="PS51863">
    <property type="entry name" value="LCN_CSAB"/>
    <property type="match status" value="1"/>
</dbReference>
<sequence>KEGYLVNSYTGCKYECLKLGDNDYCLRECRQQYGKSGGYCYAFACWCTHLYEQAVVWPLPNKTCN</sequence>
<comment type="function">
    <text evidence="1">Beta toxins bind voltage-independently at site-4 of sodium channels (Nav) and shift the voltage of activation toward more negative potentials thereby affecting sodium channel activation and promoting spontaneous and repetitive firing (By similarity). Highly potent.</text>
</comment>
<comment type="subcellular location">
    <subcellularLocation>
        <location>Secreted</location>
    </subcellularLocation>
</comment>
<comment type="tissue specificity">
    <text>Expressed by the venom gland.</text>
</comment>
<comment type="domain">
    <text evidence="4">Has the structural arrangement of an alpha-helix connected to antiparallel beta-sheets by disulfide bonds (CS-alpha/beta).</text>
</comment>
<comment type="toxic dose">
    <text evidence="3">LD(50) is 87 mg/kg by subcutaneous injection in mouse.</text>
</comment>
<comment type="similarity">
    <text evidence="4">Belongs to the long (4 C-C) scorpion toxin superfamily. Sodium channel inhibitor family. Beta subfamily.</text>
</comment>
<organism>
    <name type="scientific">Centruroides sculpturatus</name>
    <name type="common">Arizona bark scorpion</name>
    <dbReference type="NCBI Taxonomy" id="218467"/>
    <lineage>
        <taxon>Eukaryota</taxon>
        <taxon>Metazoa</taxon>
        <taxon>Ecdysozoa</taxon>
        <taxon>Arthropoda</taxon>
        <taxon>Chelicerata</taxon>
        <taxon>Arachnida</taxon>
        <taxon>Scorpiones</taxon>
        <taxon>Buthida</taxon>
        <taxon>Buthoidea</taxon>
        <taxon>Buthidae</taxon>
        <taxon>Centruroides</taxon>
    </lineage>
</organism>
<proteinExistence type="evidence at protein level"/>